<evidence type="ECO:0000255" key="1">
    <source>
        <dbReference type="PROSITE-ProRule" id="PRU00520"/>
    </source>
</evidence>
<evidence type="ECO:0000305" key="2"/>
<keyword id="KW-0378">Hydrolase</keyword>
<keyword id="KW-1185">Reference proteome</keyword>
<sequence>MQQKLFIVTGHVQSVGFRFFTLQEAGKIGIKGYVKNRPEGSVEVVAVGSDAQMAAFRNWLQKGPPTSVVCNLIEQSYQGSEQFEHFEIRR</sequence>
<reference key="1">
    <citation type="journal article" date="2008" name="J. Bacteriol.">
        <title>The complete genome sequence of Actinobacillus pleuropneumoniae L20 (serotype 5b).</title>
        <authorList>
            <person name="Foote S.J."/>
            <person name="Bosse J.T."/>
            <person name="Bouevitch A.B."/>
            <person name="Langford P.R."/>
            <person name="Young N.M."/>
            <person name="Nash J.H.E."/>
        </authorList>
    </citation>
    <scope>NUCLEOTIDE SEQUENCE [LARGE SCALE GENOMIC DNA]</scope>
    <source>
        <strain>L20</strain>
    </source>
</reference>
<protein>
    <recommendedName>
        <fullName>Acylphosphatase</fullName>
        <ecNumber>3.6.1.7</ecNumber>
    </recommendedName>
    <alternativeName>
        <fullName>Acylphosphate phosphohydrolase</fullName>
    </alternativeName>
</protein>
<proteinExistence type="inferred from homology"/>
<dbReference type="EC" id="3.6.1.7"/>
<dbReference type="EMBL" id="CP000569">
    <property type="protein sequence ID" value="ABN73251.1"/>
    <property type="molecule type" value="Genomic_DNA"/>
</dbReference>
<dbReference type="RefSeq" id="WP_009875068.1">
    <property type="nucleotide sequence ID" value="NC_009053.1"/>
</dbReference>
<dbReference type="SMR" id="A3MYL5"/>
<dbReference type="STRING" id="416269.APL_0143"/>
<dbReference type="EnsemblBacteria" id="ABN73251">
    <property type="protein sequence ID" value="ABN73251"/>
    <property type="gene ID" value="APL_0143"/>
</dbReference>
<dbReference type="KEGG" id="apl:APL_0143"/>
<dbReference type="eggNOG" id="COG1254">
    <property type="taxonomic scope" value="Bacteria"/>
</dbReference>
<dbReference type="HOGENOM" id="CLU_141932_2_1_6"/>
<dbReference type="Proteomes" id="UP000001432">
    <property type="component" value="Chromosome"/>
</dbReference>
<dbReference type="GO" id="GO:0003998">
    <property type="term" value="F:acylphosphatase activity"/>
    <property type="evidence" value="ECO:0007669"/>
    <property type="project" value="UniProtKB-EC"/>
</dbReference>
<dbReference type="Gene3D" id="3.30.70.100">
    <property type="match status" value="1"/>
</dbReference>
<dbReference type="InterPro" id="IPR020456">
    <property type="entry name" value="Acylphosphatase"/>
</dbReference>
<dbReference type="InterPro" id="IPR001792">
    <property type="entry name" value="Acylphosphatase-like_dom"/>
</dbReference>
<dbReference type="InterPro" id="IPR036046">
    <property type="entry name" value="Acylphosphatase-like_dom_sf"/>
</dbReference>
<dbReference type="InterPro" id="IPR017968">
    <property type="entry name" value="Acylphosphatase_CS"/>
</dbReference>
<dbReference type="NCBIfam" id="NF011019">
    <property type="entry name" value="PRK14448.1"/>
    <property type="match status" value="1"/>
</dbReference>
<dbReference type="PANTHER" id="PTHR47268">
    <property type="entry name" value="ACYLPHOSPHATASE"/>
    <property type="match status" value="1"/>
</dbReference>
<dbReference type="PANTHER" id="PTHR47268:SF4">
    <property type="entry name" value="ACYLPHOSPHATASE"/>
    <property type="match status" value="1"/>
</dbReference>
<dbReference type="Pfam" id="PF00708">
    <property type="entry name" value="Acylphosphatase"/>
    <property type="match status" value="1"/>
</dbReference>
<dbReference type="SUPFAM" id="SSF54975">
    <property type="entry name" value="Acylphosphatase/BLUF domain-like"/>
    <property type="match status" value="1"/>
</dbReference>
<dbReference type="PROSITE" id="PS00151">
    <property type="entry name" value="ACYLPHOSPHATASE_2"/>
    <property type="match status" value="1"/>
</dbReference>
<dbReference type="PROSITE" id="PS51160">
    <property type="entry name" value="ACYLPHOSPHATASE_3"/>
    <property type="match status" value="1"/>
</dbReference>
<feature type="chain" id="PRO_0000326642" description="Acylphosphatase">
    <location>
        <begin position="1"/>
        <end position="90"/>
    </location>
</feature>
<feature type="domain" description="Acylphosphatase-like" evidence="1">
    <location>
        <begin position="3"/>
        <end position="90"/>
    </location>
</feature>
<feature type="active site" evidence="1">
    <location>
        <position position="18"/>
    </location>
</feature>
<feature type="active site" evidence="1">
    <location>
        <position position="36"/>
    </location>
</feature>
<accession>A3MYL5</accession>
<comment type="catalytic activity">
    <reaction>
        <text>an acyl phosphate + H2O = a carboxylate + phosphate + H(+)</text>
        <dbReference type="Rhea" id="RHEA:14965"/>
        <dbReference type="ChEBI" id="CHEBI:15377"/>
        <dbReference type="ChEBI" id="CHEBI:15378"/>
        <dbReference type="ChEBI" id="CHEBI:29067"/>
        <dbReference type="ChEBI" id="CHEBI:43474"/>
        <dbReference type="ChEBI" id="CHEBI:59918"/>
        <dbReference type="EC" id="3.6.1.7"/>
    </reaction>
</comment>
<comment type="similarity">
    <text evidence="2">Belongs to the acylphosphatase family.</text>
</comment>
<organism>
    <name type="scientific">Actinobacillus pleuropneumoniae serotype 5b (strain L20)</name>
    <dbReference type="NCBI Taxonomy" id="416269"/>
    <lineage>
        <taxon>Bacteria</taxon>
        <taxon>Pseudomonadati</taxon>
        <taxon>Pseudomonadota</taxon>
        <taxon>Gammaproteobacteria</taxon>
        <taxon>Pasteurellales</taxon>
        <taxon>Pasteurellaceae</taxon>
        <taxon>Actinobacillus</taxon>
    </lineage>
</organism>
<gene>
    <name type="primary">acyP</name>
    <name type="ordered locus">APL_0143</name>
</gene>
<name>ACYP_ACTP2</name>